<comment type="function">
    <text evidence="2">Pre-mRNA processing factor involved in disassembly of spliceosomes after the release of mature mRNA.</text>
</comment>
<comment type="catalytic activity">
    <reaction>
        <text>ATP + H2O = ADP + phosphate + H(+)</text>
        <dbReference type="Rhea" id="RHEA:13065"/>
        <dbReference type="ChEBI" id="CHEBI:15377"/>
        <dbReference type="ChEBI" id="CHEBI:15378"/>
        <dbReference type="ChEBI" id="CHEBI:30616"/>
        <dbReference type="ChEBI" id="CHEBI:43474"/>
        <dbReference type="ChEBI" id="CHEBI:456216"/>
        <dbReference type="EC" id="3.6.4.13"/>
    </reaction>
</comment>
<comment type="subcellular location">
    <subcellularLocation>
        <location evidence="1">Nucleus</location>
    </subcellularLocation>
</comment>
<comment type="similarity">
    <text evidence="3">Belongs to the DEAD box helicase family. DEAH subfamily.</text>
</comment>
<name>YK99_SCHPO</name>
<keyword id="KW-0002">3D-structure</keyword>
<keyword id="KW-0067">ATP-binding</keyword>
<keyword id="KW-0347">Helicase</keyword>
<keyword id="KW-0378">Hydrolase</keyword>
<keyword id="KW-0507">mRNA processing</keyword>
<keyword id="KW-0508">mRNA splicing</keyword>
<keyword id="KW-0547">Nucleotide-binding</keyword>
<keyword id="KW-0539">Nucleus</keyword>
<keyword id="KW-1185">Reference proteome</keyword>
<evidence type="ECO:0000250" key="1"/>
<evidence type="ECO:0000250" key="2">
    <source>
        <dbReference type="UniProtKB" id="P53131"/>
    </source>
</evidence>
<evidence type="ECO:0000255" key="3"/>
<evidence type="ECO:0000255" key="4">
    <source>
        <dbReference type="PROSITE-ProRule" id="PRU00541"/>
    </source>
</evidence>
<evidence type="ECO:0000255" key="5">
    <source>
        <dbReference type="PROSITE-ProRule" id="PRU00542"/>
    </source>
</evidence>
<evidence type="ECO:0000305" key="6"/>
<evidence type="ECO:0007829" key="7">
    <source>
        <dbReference type="PDB" id="9ESI"/>
    </source>
</evidence>
<organism>
    <name type="scientific">Schizosaccharomyces pombe (strain 972 / ATCC 24843)</name>
    <name type="common">Fission yeast</name>
    <dbReference type="NCBI Taxonomy" id="284812"/>
    <lineage>
        <taxon>Eukaryota</taxon>
        <taxon>Fungi</taxon>
        <taxon>Dikarya</taxon>
        <taxon>Ascomycota</taxon>
        <taxon>Taphrinomycotina</taxon>
        <taxon>Schizosaccharomycetes</taxon>
        <taxon>Schizosaccharomycetales</taxon>
        <taxon>Schizosaccharomycetaceae</taxon>
        <taxon>Schizosaccharomyces</taxon>
    </lineage>
</organism>
<reference evidence="6" key="1">
    <citation type="journal article" date="2002" name="Nature">
        <title>The genome sequence of Schizosaccharomyces pombe.</title>
        <authorList>
            <person name="Wood V."/>
            <person name="Gwilliam R."/>
            <person name="Rajandream M.A."/>
            <person name="Lyne M.H."/>
            <person name="Lyne R."/>
            <person name="Stewart A."/>
            <person name="Sgouros J.G."/>
            <person name="Peat N."/>
            <person name="Hayles J."/>
            <person name="Baker S.G."/>
            <person name="Basham D."/>
            <person name="Bowman S."/>
            <person name="Brooks K."/>
            <person name="Brown D."/>
            <person name="Brown S."/>
            <person name="Chillingworth T."/>
            <person name="Churcher C.M."/>
            <person name="Collins M."/>
            <person name="Connor R."/>
            <person name="Cronin A."/>
            <person name="Davis P."/>
            <person name="Feltwell T."/>
            <person name="Fraser A."/>
            <person name="Gentles S."/>
            <person name="Goble A."/>
            <person name="Hamlin N."/>
            <person name="Harris D.E."/>
            <person name="Hidalgo J."/>
            <person name="Hodgson G."/>
            <person name="Holroyd S."/>
            <person name="Hornsby T."/>
            <person name="Howarth S."/>
            <person name="Huckle E.J."/>
            <person name="Hunt S."/>
            <person name="Jagels K."/>
            <person name="James K.D."/>
            <person name="Jones L."/>
            <person name="Jones M."/>
            <person name="Leather S."/>
            <person name="McDonald S."/>
            <person name="McLean J."/>
            <person name="Mooney P."/>
            <person name="Moule S."/>
            <person name="Mungall K.L."/>
            <person name="Murphy L.D."/>
            <person name="Niblett D."/>
            <person name="Odell C."/>
            <person name="Oliver K."/>
            <person name="O'Neil S."/>
            <person name="Pearson D."/>
            <person name="Quail M.A."/>
            <person name="Rabbinowitsch E."/>
            <person name="Rutherford K.M."/>
            <person name="Rutter S."/>
            <person name="Saunders D."/>
            <person name="Seeger K."/>
            <person name="Sharp S."/>
            <person name="Skelton J."/>
            <person name="Simmonds M.N."/>
            <person name="Squares R."/>
            <person name="Squares S."/>
            <person name="Stevens K."/>
            <person name="Taylor K."/>
            <person name="Taylor R.G."/>
            <person name="Tivey A."/>
            <person name="Walsh S.V."/>
            <person name="Warren T."/>
            <person name="Whitehead S."/>
            <person name="Woodward J.R."/>
            <person name="Volckaert G."/>
            <person name="Aert R."/>
            <person name="Robben J."/>
            <person name="Grymonprez B."/>
            <person name="Weltjens I."/>
            <person name="Vanstreels E."/>
            <person name="Rieger M."/>
            <person name="Schaefer M."/>
            <person name="Mueller-Auer S."/>
            <person name="Gabel C."/>
            <person name="Fuchs M."/>
            <person name="Duesterhoeft A."/>
            <person name="Fritzc C."/>
            <person name="Holzer E."/>
            <person name="Moestl D."/>
            <person name="Hilbert H."/>
            <person name="Borzym K."/>
            <person name="Langer I."/>
            <person name="Beck A."/>
            <person name="Lehrach H."/>
            <person name="Reinhardt R."/>
            <person name="Pohl T.M."/>
            <person name="Eger P."/>
            <person name="Zimmermann W."/>
            <person name="Wedler H."/>
            <person name="Wambutt R."/>
            <person name="Purnelle B."/>
            <person name="Goffeau A."/>
            <person name="Cadieu E."/>
            <person name="Dreano S."/>
            <person name="Gloux S."/>
            <person name="Lelaure V."/>
            <person name="Mottier S."/>
            <person name="Galibert F."/>
            <person name="Aves S.J."/>
            <person name="Xiang Z."/>
            <person name="Hunt C."/>
            <person name="Moore K."/>
            <person name="Hurst S.M."/>
            <person name="Lucas M."/>
            <person name="Rochet M."/>
            <person name="Gaillardin C."/>
            <person name="Tallada V.A."/>
            <person name="Garzon A."/>
            <person name="Thode G."/>
            <person name="Daga R.R."/>
            <person name="Cruzado L."/>
            <person name="Jimenez J."/>
            <person name="Sanchez M."/>
            <person name="del Rey F."/>
            <person name="Benito J."/>
            <person name="Dominguez A."/>
            <person name="Revuelta J.L."/>
            <person name="Moreno S."/>
            <person name="Armstrong J."/>
            <person name="Forsburg S.L."/>
            <person name="Cerutti L."/>
            <person name="Lowe T."/>
            <person name="McCombie W.R."/>
            <person name="Paulsen I."/>
            <person name="Potashkin J."/>
            <person name="Shpakovski G.V."/>
            <person name="Ussery D."/>
            <person name="Barrell B.G."/>
            <person name="Nurse P."/>
        </authorList>
    </citation>
    <scope>NUCLEOTIDE SEQUENCE [LARGE SCALE GENOMIC DNA]</scope>
    <source>
        <strain>972 / ATCC 24843</strain>
    </source>
</reference>
<sequence length="647" mass="73033">MPNEFISQSLSTLTNTPLNIQKKLLPITKYRNQLLYAVEQNQITIVLGHTGCGKTTQIPQFLYEAGWASQNGIIGCTQPRRLVAKSVSERVSLELNSPPGSLCGYSIQFDHNVSEKTKIKYMTDGILLNEIFFDPLLERYSIVILDEVHERTLSTDLLLGVLKRILEKRNDFRLVLSSASVDANKLSQFFGQDKVCTMSIEGKLFPVETLFLQKPTENYVDSAIETVININSTYPPGDILVFLSGRKEIEYCIKKIEDSLIHASEDCQTLVPLPLHAGLTVDEQMRVFNIYDGDFRKVIFSTNIAETSITIDGIVYVVDSGFNKQRIYNPYTRTSKLINVPISKSSAIQRSGRAGRTMRGKVFRLYTEKAYSLMKEEFEADILNCDMSPLVLFLKGLGLKNILQFPFFVRPPTVHLMAALEDLYLLGVLDESGNLTDPLGIQISNSFLDANISKALLTSNQFGCTHEILSIASILTAGEVFYNPTSSSKNDAFVAHSSFFANEGDIITALNVFESFVGNKKDLQWCRKNYLNYQTLRQALDIRTHLVRFLNKFSIPTAQRLPSSDCSKILKCLLDGFVRNVAHLQNDGSYKTIGGKQVWLDSSSVLHEKKTPWIMYSSAVESETQIFVKNISKIESFWLDKYYKREK</sequence>
<gene>
    <name type="ORF">SPAC20H4.09</name>
</gene>
<dbReference type="EC" id="3.6.4.13"/>
<dbReference type="EMBL" id="CU329670">
    <property type="protein sequence ID" value="CAC19739.1"/>
    <property type="molecule type" value="Genomic_DNA"/>
</dbReference>
<dbReference type="PDB" id="9ESH">
    <property type="method" value="EM"/>
    <property type="resolution" value="3.20 A"/>
    <property type="chains" value="z=1-647"/>
</dbReference>
<dbReference type="PDB" id="9ESI">
    <property type="method" value="EM"/>
    <property type="resolution" value="3.10 A"/>
    <property type="chains" value="z=1-647"/>
</dbReference>
<dbReference type="PDBsum" id="9ESH"/>
<dbReference type="PDBsum" id="9ESI"/>
<dbReference type="EMDB" id="EMD-19941"/>
<dbReference type="EMDB" id="EMD-19942"/>
<dbReference type="SMR" id="Q9HE06"/>
<dbReference type="BioGRID" id="279319">
    <property type="interactions" value="81"/>
</dbReference>
<dbReference type="FunCoup" id="Q9HE06">
    <property type="interactions" value="1"/>
</dbReference>
<dbReference type="STRING" id="284812.Q9HE06"/>
<dbReference type="PaxDb" id="4896-SPAC20H4.09.1"/>
<dbReference type="EnsemblFungi" id="SPAC20H4.09.1">
    <property type="protein sequence ID" value="SPAC20H4.09.1:pep"/>
    <property type="gene ID" value="SPAC20H4.09"/>
</dbReference>
<dbReference type="KEGG" id="spo:2542874"/>
<dbReference type="PomBase" id="SPAC20H4.09"/>
<dbReference type="VEuPathDB" id="FungiDB:SPAC20H4.09"/>
<dbReference type="eggNOG" id="KOG0922">
    <property type="taxonomic scope" value="Eukaryota"/>
</dbReference>
<dbReference type="HOGENOM" id="CLU_001832_5_11_1"/>
<dbReference type="InParanoid" id="Q9HE06"/>
<dbReference type="OMA" id="FHEVMET"/>
<dbReference type="PhylomeDB" id="Q9HE06"/>
<dbReference type="Reactome" id="R-SPO-72163">
    <property type="pathway name" value="mRNA Splicing - Major Pathway"/>
</dbReference>
<dbReference type="PRO" id="PR:Q9HE06"/>
<dbReference type="Proteomes" id="UP000002485">
    <property type="component" value="Chromosome I"/>
</dbReference>
<dbReference type="GO" id="GO:0071013">
    <property type="term" value="C:catalytic step 2 spliceosome"/>
    <property type="evidence" value="ECO:0000318"/>
    <property type="project" value="GO_Central"/>
</dbReference>
<dbReference type="GO" id="GO:0005829">
    <property type="term" value="C:cytosol"/>
    <property type="evidence" value="ECO:0007005"/>
    <property type="project" value="PomBase"/>
</dbReference>
<dbReference type="GO" id="GO:0005634">
    <property type="term" value="C:nucleus"/>
    <property type="evidence" value="ECO:0007005"/>
    <property type="project" value="PomBase"/>
</dbReference>
<dbReference type="GO" id="GO:0005681">
    <property type="term" value="C:spliceosomal complex"/>
    <property type="evidence" value="ECO:0000353"/>
    <property type="project" value="PomBase"/>
</dbReference>
<dbReference type="GO" id="GO:0005524">
    <property type="term" value="F:ATP binding"/>
    <property type="evidence" value="ECO:0007669"/>
    <property type="project" value="UniProtKB-KW"/>
</dbReference>
<dbReference type="GO" id="GO:0016887">
    <property type="term" value="F:ATP hydrolysis activity"/>
    <property type="evidence" value="ECO:0007669"/>
    <property type="project" value="RHEA"/>
</dbReference>
<dbReference type="GO" id="GO:0003723">
    <property type="term" value="F:RNA binding"/>
    <property type="evidence" value="ECO:0000318"/>
    <property type="project" value="GO_Central"/>
</dbReference>
<dbReference type="GO" id="GO:0003724">
    <property type="term" value="F:RNA helicase activity"/>
    <property type="evidence" value="ECO:0000250"/>
    <property type="project" value="UniProtKB"/>
</dbReference>
<dbReference type="GO" id="GO:0045292">
    <property type="term" value="P:mRNA cis splicing, via spliceosome"/>
    <property type="evidence" value="ECO:0000315"/>
    <property type="project" value="PomBase"/>
</dbReference>
<dbReference type="GO" id="GO:0000398">
    <property type="term" value="P:mRNA splicing, via spliceosome"/>
    <property type="evidence" value="ECO:0000318"/>
    <property type="project" value="GO_Central"/>
</dbReference>
<dbReference type="CDD" id="cd17917">
    <property type="entry name" value="DEXHc_RHA-like"/>
    <property type="match status" value="1"/>
</dbReference>
<dbReference type="CDD" id="cd18791">
    <property type="entry name" value="SF2_C_RHA"/>
    <property type="match status" value="1"/>
</dbReference>
<dbReference type="FunFam" id="3.40.50.300:FF:001279">
    <property type="entry name" value="ATP-dependent RNA helicase DEAH12 chloroplastic"/>
    <property type="match status" value="1"/>
</dbReference>
<dbReference type="FunFam" id="3.40.50.300:FF:002840">
    <property type="entry name" value="Pre-mRNA splicing factor ATP-dependent RNA helicase, putative"/>
    <property type="match status" value="1"/>
</dbReference>
<dbReference type="Gene3D" id="1.20.120.1080">
    <property type="match status" value="1"/>
</dbReference>
<dbReference type="Gene3D" id="3.40.50.300">
    <property type="entry name" value="P-loop containing nucleotide triphosphate hydrolases"/>
    <property type="match status" value="2"/>
</dbReference>
<dbReference type="InterPro" id="IPR011709">
    <property type="entry name" value="DEAD-box_helicase_OB_fold"/>
</dbReference>
<dbReference type="InterPro" id="IPR011545">
    <property type="entry name" value="DEAD/DEAH_box_helicase_dom"/>
</dbReference>
<dbReference type="InterPro" id="IPR002464">
    <property type="entry name" value="DNA/RNA_helicase_DEAH_CS"/>
</dbReference>
<dbReference type="InterPro" id="IPR048333">
    <property type="entry name" value="HA2_WH"/>
</dbReference>
<dbReference type="InterPro" id="IPR007502">
    <property type="entry name" value="Helicase-assoc_dom"/>
</dbReference>
<dbReference type="InterPro" id="IPR014001">
    <property type="entry name" value="Helicase_ATP-bd"/>
</dbReference>
<dbReference type="InterPro" id="IPR001650">
    <property type="entry name" value="Helicase_C-like"/>
</dbReference>
<dbReference type="InterPro" id="IPR027417">
    <property type="entry name" value="P-loop_NTPase"/>
</dbReference>
<dbReference type="PANTHER" id="PTHR18934">
    <property type="entry name" value="ATP-DEPENDENT RNA HELICASE"/>
    <property type="match status" value="1"/>
</dbReference>
<dbReference type="PANTHER" id="PTHR18934:SF253">
    <property type="entry name" value="PRE-MRNA-SPLICING FACTOR ATP-DEPENDENT RNA HELICASE C20H4.09-RELATED"/>
    <property type="match status" value="1"/>
</dbReference>
<dbReference type="Pfam" id="PF00270">
    <property type="entry name" value="DEAD"/>
    <property type="match status" value="1"/>
</dbReference>
<dbReference type="Pfam" id="PF21010">
    <property type="entry name" value="HA2_C"/>
    <property type="match status" value="1"/>
</dbReference>
<dbReference type="Pfam" id="PF04408">
    <property type="entry name" value="HA2_N"/>
    <property type="match status" value="1"/>
</dbReference>
<dbReference type="Pfam" id="PF00271">
    <property type="entry name" value="Helicase_C"/>
    <property type="match status" value="1"/>
</dbReference>
<dbReference type="Pfam" id="PF07717">
    <property type="entry name" value="OB_NTP_bind"/>
    <property type="match status" value="1"/>
</dbReference>
<dbReference type="SMART" id="SM00487">
    <property type="entry name" value="DEXDc"/>
    <property type="match status" value="1"/>
</dbReference>
<dbReference type="SMART" id="SM00847">
    <property type="entry name" value="HA2"/>
    <property type="match status" value="1"/>
</dbReference>
<dbReference type="SMART" id="SM00490">
    <property type="entry name" value="HELICc"/>
    <property type="match status" value="1"/>
</dbReference>
<dbReference type="SUPFAM" id="SSF52540">
    <property type="entry name" value="P-loop containing nucleoside triphosphate hydrolases"/>
    <property type="match status" value="1"/>
</dbReference>
<dbReference type="PROSITE" id="PS00690">
    <property type="entry name" value="DEAH_ATP_HELICASE"/>
    <property type="match status" value="1"/>
</dbReference>
<dbReference type="PROSITE" id="PS51192">
    <property type="entry name" value="HELICASE_ATP_BIND_1"/>
    <property type="match status" value="1"/>
</dbReference>
<dbReference type="PROSITE" id="PS51194">
    <property type="entry name" value="HELICASE_CTER"/>
    <property type="match status" value="1"/>
</dbReference>
<accession>Q9HE06</accession>
<feature type="chain" id="PRO_0000055171" description="Putative pre-mRNA-splicing factor ATP-dependent RNA helicase C20H4.09">
    <location>
        <begin position="1"/>
        <end position="647"/>
    </location>
</feature>
<feature type="domain" description="Helicase ATP-binding" evidence="4">
    <location>
        <begin position="35"/>
        <end position="199"/>
    </location>
</feature>
<feature type="domain" description="Helicase C-terminal" evidence="5">
    <location>
        <begin position="219"/>
        <end position="398"/>
    </location>
</feature>
<feature type="short sequence motif" description="DEAH box">
    <location>
        <begin position="146"/>
        <end position="149"/>
    </location>
</feature>
<feature type="binding site" evidence="4">
    <location>
        <begin position="48"/>
        <end position="55"/>
    </location>
    <ligand>
        <name>ATP</name>
        <dbReference type="ChEBI" id="CHEBI:30616"/>
    </ligand>
</feature>
<feature type="helix" evidence="7">
    <location>
        <begin position="21"/>
        <end position="24"/>
    </location>
</feature>
<feature type="helix" evidence="7">
    <location>
        <begin position="26"/>
        <end position="30"/>
    </location>
</feature>
<feature type="helix" evidence="7">
    <location>
        <begin position="31"/>
        <end position="40"/>
    </location>
</feature>
<feature type="strand" evidence="7">
    <location>
        <begin position="42"/>
        <end position="47"/>
    </location>
</feature>
<feature type="helix" evidence="7">
    <location>
        <begin position="54"/>
        <end position="65"/>
    </location>
</feature>
<feature type="turn" evidence="7">
    <location>
        <begin position="66"/>
        <end position="68"/>
    </location>
</feature>
<feature type="strand" evidence="7">
    <location>
        <begin position="74"/>
        <end position="77"/>
    </location>
</feature>
<feature type="helix" evidence="7">
    <location>
        <begin position="81"/>
        <end position="94"/>
    </location>
</feature>
<feature type="turn" evidence="7">
    <location>
        <begin position="99"/>
        <end position="101"/>
    </location>
</feature>
<feature type="strand" evidence="7">
    <location>
        <begin position="102"/>
        <end position="107"/>
    </location>
</feature>
<feature type="strand" evidence="7">
    <location>
        <begin position="110"/>
        <end position="112"/>
    </location>
</feature>
<feature type="strand" evidence="7">
    <location>
        <begin position="119"/>
        <end position="122"/>
    </location>
</feature>
<feature type="helix" evidence="7">
    <location>
        <begin position="124"/>
        <end position="133"/>
    </location>
</feature>
<feature type="strand" evidence="7">
    <location>
        <begin position="141"/>
        <end position="145"/>
    </location>
</feature>
<feature type="helix" evidence="7">
    <location>
        <begin position="148"/>
        <end position="150"/>
    </location>
</feature>
<feature type="helix" evidence="7">
    <location>
        <begin position="153"/>
        <end position="168"/>
    </location>
</feature>
<feature type="strand" evidence="7">
    <location>
        <begin position="173"/>
        <end position="181"/>
    </location>
</feature>
<feature type="helix" evidence="7">
    <location>
        <begin position="183"/>
        <end position="190"/>
    </location>
</feature>
<feature type="helix" evidence="7">
    <location>
        <begin position="192"/>
        <end position="194"/>
    </location>
</feature>
<feature type="strand" evidence="7">
    <location>
        <begin position="195"/>
        <end position="199"/>
    </location>
</feature>
<feature type="strand" evidence="7">
    <location>
        <begin position="208"/>
        <end position="211"/>
    </location>
</feature>
<feature type="helix" evidence="7">
    <location>
        <begin position="219"/>
        <end position="233"/>
    </location>
</feature>
<feature type="strand" evidence="7">
    <location>
        <begin position="238"/>
        <end position="242"/>
    </location>
</feature>
<feature type="turn" evidence="7">
    <location>
        <begin position="246"/>
        <end position="248"/>
    </location>
</feature>
<feature type="helix" evidence="7">
    <location>
        <begin position="249"/>
        <end position="261"/>
    </location>
</feature>
<feature type="strand" evidence="7">
    <location>
        <begin position="269"/>
        <end position="275"/>
    </location>
</feature>
<feature type="helix" evidence="7">
    <location>
        <begin position="281"/>
        <end position="286"/>
    </location>
</feature>
<feature type="strand" evidence="7">
    <location>
        <begin position="293"/>
        <end position="304"/>
    </location>
</feature>
<feature type="strand" evidence="7">
    <location>
        <begin position="314"/>
        <end position="319"/>
    </location>
</feature>
<feature type="strand" evidence="7">
    <location>
        <begin position="321"/>
        <end position="329"/>
    </location>
</feature>
<feature type="turn" evidence="7">
    <location>
        <begin position="330"/>
        <end position="333"/>
    </location>
</feature>
<feature type="strand" evidence="7">
    <location>
        <begin position="334"/>
        <end position="341"/>
    </location>
</feature>
<feature type="helix" evidence="7">
    <location>
        <begin position="344"/>
        <end position="353"/>
    </location>
</feature>
<feature type="strand" evidence="7">
    <location>
        <begin position="356"/>
        <end position="358"/>
    </location>
</feature>
<feature type="strand" evidence="7">
    <location>
        <begin position="361"/>
        <end position="366"/>
    </location>
</feature>
<feature type="helix" evidence="7">
    <location>
        <begin position="368"/>
        <end position="371"/>
    </location>
</feature>
<feature type="helix" evidence="7">
    <location>
        <begin position="381"/>
        <end position="383"/>
    </location>
</feature>
<feature type="helix" evidence="7">
    <location>
        <begin position="388"/>
        <end position="397"/>
    </location>
</feature>
<feature type="helix" evidence="7">
    <location>
        <begin position="402"/>
        <end position="404"/>
    </location>
</feature>
<feature type="helix" evidence="7">
    <location>
        <begin position="413"/>
        <end position="425"/>
    </location>
</feature>
<feature type="strand" evidence="7">
    <location>
        <begin position="433"/>
        <end position="435"/>
    </location>
</feature>
<feature type="helix" evidence="7">
    <location>
        <begin position="437"/>
        <end position="444"/>
    </location>
</feature>
<feature type="helix" evidence="7">
    <location>
        <begin position="450"/>
        <end position="458"/>
    </location>
</feature>
<feature type="turn" evidence="7">
    <location>
        <begin position="459"/>
        <end position="463"/>
    </location>
</feature>
<feature type="helix" evidence="7">
    <location>
        <begin position="465"/>
        <end position="477"/>
    </location>
</feature>
<feature type="helix" evidence="7">
    <location>
        <begin position="488"/>
        <end position="496"/>
    </location>
</feature>
<feature type="helix" evidence="7">
    <location>
        <begin position="497"/>
        <end position="499"/>
    </location>
</feature>
<feature type="helix" evidence="7">
    <location>
        <begin position="505"/>
        <end position="517"/>
    </location>
</feature>
<feature type="turn" evidence="7">
    <location>
        <begin position="518"/>
        <end position="521"/>
    </location>
</feature>
<feature type="helix" evidence="7">
    <location>
        <begin position="523"/>
        <end position="528"/>
    </location>
</feature>
<feature type="helix" evidence="7">
    <location>
        <begin position="533"/>
        <end position="552"/>
    </location>
</feature>
<feature type="helix" evidence="7">
    <location>
        <begin position="567"/>
        <end position="576"/>
    </location>
</feature>
<feature type="strand" evidence="7">
    <location>
        <begin position="577"/>
        <end position="579"/>
    </location>
</feature>
<feature type="strand" evidence="7">
    <location>
        <begin position="581"/>
        <end position="584"/>
    </location>
</feature>
<feature type="strand" evidence="7">
    <location>
        <begin position="590"/>
        <end position="592"/>
    </location>
</feature>
<feature type="strand" evidence="7">
    <location>
        <begin position="597"/>
        <end position="600"/>
    </location>
</feature>
<feature type="strand" evidence="7">
    <location>
        <begin position="607"/>
        <end position="609"/>
    </location>
</feature>
<feature type="strand" evidence="7">
    <location>
        <begin position="612"/>
        <end position="615"/>
    </location>
</feature>
<feature type="strand" evidence="7">
    <location>
        <begin position="617"/>
        <end position="621"/>
    </location>
</feature>
<feature type="strand" evidence="7">
    <location>
        <begin position="626"/>
        <end position="630"/>
    </location>
</feature>
<feature type="helix" evidence="7">
    <location>
        <begin position="636"/>
        <end position="643"/>
    </location>
</feature>
<protein>
    <recommendedName>
        <fullName>Putative pre-mRNA-splicing factor ATP-dependent RNA helicase C20H4.09</fullName>
        <ecNumber>3.6.4.13</ecNumber>
    </recommendedName>
    <alternativeName>
        <fullName>DEAH-box helicase C20H4.09</fullName>
    </alternativeName>
</protein>
<proteinExistence type="evidence at protein level"/>